<evidence type="ECO:0000255" key="1">
    <source>
        <dbReference type="HAMAP-Rule" id="MF_00182"/>
    </source>
</evidence>
<keyword id="KW-0648">Protein biosynthesis</keyword>
<keyword id="KW-0808">Transferase</keyword>
<protein>
    <recommendedName>
        <fullName evidence="1">Methionyl-tRNA formyltransferase</fullName>
        <ecNumber evidence="1">2.1.2.9</ecNumber>
    </recommendedName>
</protein>
<proteinExistence type="inferred from homology"/>
<sequence length="314" mass="34722">MIKVVFMGTPDFSVPVLRRLIEDGYDVIGVVTQPDRPVGRKKVLTPTPVKVEAEKHGIPVLQPLRIREKDEYEKVLALEPDLIVTAAFGQIVPNEILEAPKYGCINVHASLLPELRGGAPIHYAIMEGKEKTGITIMYMVEKLDAGDILTQVEVEIEERETTGSLFDKLSEAGAHLLSKTVPLLIQGKLEPIKQNEEEVTFAYNIKREQEKIDWTKTGEEVYNHIRGLNPWPVAYTTLAGQVVKVWWGEKVPVTKSAEAGTIVAIEEDGFVVATGNETGVKVTELQPSGKKRMSCSQFLRGTKPEIGTKLGENA</sequence>
<gene>
    <name evidence="1" type="primary">fmt</name>
    <name type="ordered locus">BCAH187_A3914</name>
</gene>
<feature type="chain" id="PRO_1000118471" description="Methionyl-tRNA formyltransferase">
    <location>
        <begin position="1"/>
        <end position="314"/>
    </location>
</feature>
<feature type="binding site" evidence="1">
    <location>
        <begin position="110"/>
        <end position="113"/>
    </location>
    <ligand>
        <name>(6S)-5,6,7,8-tetrahydrofolate</name>
        <dbReference type="ChEBI" id="CHEBI:57453"/>
    </ligand>
</feature>
<reference key="1">
    <citation type="submission" date="2008-10" db="EMBL/GenBank/DDBJ databases">
        <title>Genome sequence of Bacillus cereus AH187.</title>
        <authorList>
            <person name="Dodson R.J."/>
            <person name="Durkin A.S."/>
            <person name="Rosovitz M.J."/>
            <person name="Rasko D.A."/>
            <person name="Kolsto A.B."/>
            <person name="Okstad O.A."/>
            <person name="Ravel J."/>
            <person name="Sutton G."/>
        </authorList>
    </citation>
    <scope>NUCLEOTIDE SEQUENCE [LARGE SCALE GENOMIC DNA]</scope>
    <source>
        <strain>AH187</strain>
    </source>
</reference>
<dbReference type="EC" id="2.1.2.9" evidence="1"/>
<dbReference type="EMBL" id="CP001177">
    <property type="protein sequence ID" value="ACJ79363.1"/>
    <property type="molecule type" value="Genomic_DNA"/>
</dbReference>
<dbReference type="SMR" id="B7HLJ9"/>
<dbReference type="KEGG" id="bcr:BCAH187_A3914"/>
<dbReference type="HOGENOM" id="CLU_033347_1_1_9"/>
<dbReference type="Proteomes" id="UP000002214">
    <property type="component" value="Chromosome"/>
</dbReference>
<dbReference type="GO" id="GO:0005829">
    <property type="term" value="C:cytosol"/>
    <property type="evidence" value="ECO:0007669"/>
    <property type="project" value="TreeGrafter"/>
</dbReference>
<dbReference type="GO" id="GO:0004479">
    <property type="term" value="F:methionyl-tRNA formyltransferase activity"/>
    <property type="evidence" value="ECO:0007669"/>
    <property type="project" value="UniProtKB-UniRule"/>
</dbReference>
<dbReference type="CDD" id="cd08646">
    <property type="entry name" value="FMT_core_Met-tRNA-FMT_N"/>
    <property type="match status" value="1"/>
</dbReference>
<dbReference type="CDD" id="cd08704">
    <property type="entry name" value="Met_tRNA_FMT_C"/>
    <property type="match status" value="1"/>
</dbReference>
<dbReference type="FunFam" id="3.10.25.10:FF:000003">
    <property type="entry name" value="Methionyl-tRNA formyltransferase"/>
    <property type="match status" value="1"/>
</dbReference>
<dbReference type="FunFam" id="3.40.50.170:FF:000004">
    <property type="entry name" value="Methionyl-tRNA formyltransferase"/>
    <property type="match status" value="1"/>
</dbReference>
<dbReference type="Gene3D" id="3.10.25.10">
    <property type="entry name" value="Formyl transferase, C-terminal domain"/>
    <property type="match status" value="1"/>
</dbReference>
<dbReference type="Gene3D" id="3.40.50.170">
    <property type="entry name" value="Formyl transferase, N-terminal domain"/>
    <property type="match status" value="1"/>
</dbReference>
<dbReference type="HAMAP" id="MF_00182">
    <property type="entry name" value="Formyl_trans"/>
    <property type="match status" value="1"/>
</dbReference>
<dbReference type="InterPro" id="IPR005794">
    <property type="entry name" value="Fmt"/>
</dbReference>
<dbReference type="InterPro" id="IPR005793">
    <property type="entry name" value="Formyl_trans_C"/>
</dbReference>
<dbReference type="InterPro" id="IPR037022">
    <property type="entry name" value="Formyl_trans_C_sf"/>
</dbReference>
<dbReference type="InterPro" id="IPR002376">
    <property type="entry name" value="Formyl_transf_N"/>
</dbReference>
<dbReference type="InterPro" id="IPR036477">
    <property type="entry name" value="Formyl_transf_N_sf"/>
</dbReference>
<dbReference type="InterPro" id="IPR011034">
    <property type="entry name" value="Formyl_transferase-like_C_sf"/>
</dbReference>
<dbReference type="InterPro" id="IPR001555">
    <property type="entry name" value="GART_AS"/>
</dbReference>
<dbReference type="InterPro" id="IPR044135">
    <property type="entry name" value="Met-tRNA-FMT_C"/>
</dbReference>
<dbReference type="InterPro" id="IPR041711">
    <property type="entry name" value="Met-tRNA-FMT_N"/>
</dbReference>
<dbReference type="NCBIfam" id="TIGR00460">
    <property type="entry name" value="fmt"/>
    <property type="match status" value="1"/>
</dbReference>
<dbReference type="PANTHER" id="PTHR11138">
    <property type="entry name" value="METHIONYL-TRNA FORMYLTRANSFERASE"/>
    <property type="match status" value="1"/>
</dbReference>
<dbReference type="PANTHER" id="PTHR11138:SF5">
    <property type="entry name" value="METHIONYL-TRNA FORMYLTRANSFERASE, MITOCHONDRIAL"/>
    <property type="match status" value="1"/>
</dbReference>
<dbReference type="Pfam" id="PF02911">
    <property type="entry name" value="Formyl_trans_C"/>
    <property type="match status" value="1"/>
</dbReference>
<dbReference type="Pfam" id="PF00551">
    <property type="entry name" value="Formyl_trans_N"/>
    <property type="match status" value="1"/>
</dbReference>
<dbReference type="SUPFAM" id="SSF50486">
    <property type="entry name" value="FMT C-terminal domain-like"/>
    <property type="match status" value="1"/>
</dbReference>
<dbReference type="SUPFAM" id="SSF53328">
    <property type="entry name" value="Formyltransferase"/>
    <property type="match status" value="1"/>
</dbReference>
<dbReference type="PROSITE" id="PS00373">
    <property type="entry name" value="GART"/>
    <property type="match status" value="1"/>
</dbReference>
<comment type="function">
    <text evidence="1">Attaches a formyl group to the free amino group of methionyl-tRNA(fMet). The formyl group appears to play a dual role in the initiator identity of N-formylmethionyl-tRNA by promoting its recognition by IF2 and preventing the misappropriation of this tRNA by the elongation apparatus.</text>
</comment>
<comment type="catalytic activity">
    <reaction evidence="1">
        <text>L-methionyl-tRNA(fMet) + (6R)-10-formyltetrahydrofolate = N-formyl-L-methionyl-tRNA(fMet) + (6S)-5,6,7,8-tetrahydrofolate + H(+)</text>
        <dbReference type="Rhea" id="RHEA:24380"/>
        <dbReference type="Rhea" id="RHEA-COMP:9952"/>
        <dbReference type="Rhea" id="RHEA-COMP:9953"/>
        <dbReference type="ChEBI" id="CHEBI:15378"/>
        <dbReference type="ChEBI" id="CHEBI:57453"/>
        <dbReference type="ChEBI" id="CHEBI:78530"/>
        <dbReference type="ChEBI" id="CHEBI:78844"/>
        <dbReference type="ChEBI" id="CHEBI:195366"/>
        <dbReference type="EC" id="2.1.2.9"/>
    </reaction>
</comment>
<comment type="similarity">
    <text evidence="1">Belongs to the Fmt family.</text>
</comment>
<name>FMT_BACC7</name>
<organism>
    <name type="scientific">Bacillus cereus (strain AH187)</name>
    <dbReference type="NCBI Taxonomy" id="405534"/>
    <lineage>
        <taxon>Bacteria</taxon>
        <taxon>Bacillati</taxon>
        <taxon>Bacillota</taxon>
        <taxon>Bacilli</taxon>
        <taxon>Bacillales</taxon>
        <taxon>Bacillaceae</taxon>
        <taxon>Bacillus</taxon>
        <taxon>Bacillus cereus group</taxon>
    </lineage>
</organism>
<accession>B7HLJ9</accession>